<evidence type="ECO:0000250" key="1"/>
<evidence type="ECO:0000255" key="2">
    <source>
        <dbReference type="PROSITE-ProRule" id="PRU10114"/>
    </source>
</evidence>
<evidence type="ECO:0000305" key="3"/>
<keyword id="KW-0113">Calvin cycle</keyword>
<keyword id="KW-0120">Carbon dioxide fixation</keyword>
<keyword id="KW-0150">Chloroplast</keyword>
<keyword id="KW-0903">Direct protein sequencing</keyword>
<keyword id="KW-0456">Lyase</keyword>
<keyword id="KW-0460">Magnesium</keyword>
<keyword id="KW-0479">Metal-binding</keyword>
<keyword id="KW-0503">Monooxygenase</keyword>
<keyword id="KW-0560">Oxidoreductase</keyword>
<keyword id="KW-0601">Photorespiration</keyword>
<keyword id="KW-0602">Photosynthesis</keyword>
<keyword id="KW-0934">Plastid</keyword>
<keyword id="KW-0677">Repeat</keyword>
<name>RBL2_SYMSP</name>
<dbReference type="EC" id="4.1.1.39"/>
<dbReference type="EMBL" id="U43532">
    <property type="protein sequence ID" value="AAB17550.1"/>
    <property type="molecule type" value="Genomic_DNA"/>
</dbReference>
<dbReference type="PIR" id="T29094">
    <property type="entry name" value="T29094"/>
</dbReference>
<dbReference type="SMR" id="Q41406"/>
<dbReference type="BRENDA" id="4.1.1.39">
    <property type="organism ID" value="7052"/>
</dbReference>
<dbReference type="GO" id="GO:0009507">
    <property type="term" value="C:chloroplast"/>
    <property type="evidence" value="ECO:0007669"/>
    <property type="project" value="UniProtKB-SubCell"/>
</dbReference>
<dbReference type="GO" id="GO:0000287">
    <property type="term" value="F:magnesium ion binding"/>
    <property type="evidence" value="ECO:0007669"/>
    <property type="project" value="InterPro"/>
</dbReference>
<dbReference type="GO" id="GO:0004497">
    <property type="term" value="F:monooxygenase activity"/>
    <property type="evidence" value="ECO:0007669"/>
    <property type="project" value="UniProtKB-KW"/>
</dbReference>
<dbReference type="GO" id="GO:0016984">
    <property type="term" value="F:ribulose-bisphosphate carboxylase activity"/>
    <property type="evidence" value="ECO:0007669"/>
    <property type="project" value="UniProtKB-EC"/>
</dbReference>
<dbReference type="GO" id="GO:0019253">
    <property type="term" value="P:reductive pentose-phosphate cycle"/>
    <property type="evidence" value="ECO:0007669"/>
    <property type="project" value="UniProtKB-KW"/>
</dbReference>
<dbReference type="CDD" id="cd08211">
    <property type="entry name" value="RuBisCO_large_II"/>
    <property type="match status" value="3"/>
</dbReference>
<dbReference type="Gene3D" id="3.20.20.110">
    <property type="entry name" value="Ribulose bisphosphate carboxylase, large subunit, C-terminal domain"/>
    <property type="match status" value="3"/>
</dbReference>
<dbReference type="Gene3D" id="3.30.70.150">
    <property type="entry name" value="RuBisCO large subunit, N-terminal domain"/>
    <property type="match status" value="3"/>
</dbReference>
<dbReference type="InterPro" id="IPR033966">
    <property type="entry name" value="RuBisCO"/>
</dbReference>
<dbReference type="InterPro" id="IPR020878">
    <property type="entry name" value="RuBisCo_large_chain_AS"/>
</dbReference>
<dbReference type="InterPro" id="IPR000685">
    <property type="entry name" value="RuBisCO_lsu_C"/>
</dbReference>
<dbReference type="InterPro" id="IPR036376">
    <property type="entry name" value="RuBisCO_lsu_C_sf"/>
</dbReference>
<dbReference type="InterPro" id="IPR017443">
    <property type="entry name" value="RuBisCO_lsu_fd_N"/>
</dbReference>
<dbReference type="InterPro" id="IPR036422">
    <property type="entry name" value="RuBisCO_lsu_N_sf"/>
</dbReference>
<dbReference type="InterPro" id="IPR020871">
    <property type="entry name" value="RuBisCO_lsuII"/>
</dbReference>
<dbReference type="NCBIfam" id="NF010002">
    <property type="entry name" value="PRK13475.1"/>
    <property type="match status" value="3"/>
</dbReference>
<dbReference type="PANTHER" id="PTHR42704">
    <property type="entry name" value="RIBULOSE BISPHOSPHATE CARBOXYLASE"/>
    <property type="match status" value="1"/>
</dbReference>
<dbReference type="PANTHER" id="PTHR42704:SF17">
    <property type="entry name" value="RIBULOSE BISPHOSPHATE CARBOXYLASE LARGE CHAIN"/>
    <property type="match status" value="1"/>
</dbReference>
<dbReference type="Pfam" id="PF00016">
    <property type="entry name" value="RuBisCO_large"/>
    <property type="match status" value="3"/>
</dbReference>
<dbReference type="Pfam" id="PF02788">
    <property type="entry name" value="RuBisCO_large_N"/>
    <property type="match status" value="3"/>
</dbReference>
<dbReference type="SUPFAM" id="SSF51649">
    <property type="entry name" value="RuBisCo, C-terminal domain"/>
    <property type="match status" value="3"/>
</dbReference>
<dbReference type="SUPFAM" id="SSF54966">
    <property type="entry name" value="RuBisCO, large subunit, small (N-terminal) domain"/>
    <property type="match status" value="3"/>
</dbReference>
<dbReference type="PROSITE" id="PS00157">
    <property type="entry name" value="RUBISCO_LARGE"/>
    <property type="match status" value="3"/>
</dbReference>
<sequence>LDQSSRYADLSLDEDTLIRNGKHVLVAYIMKPKAGYDYLATAAHFAAESSTGTNVNVCTTDDFTKSVDALVYYIDPDNEEMKIAYPTLLFDRNITDGRGMMCSFLTLAIGNNQGMGDVEYGKIYDFYLPPAFLRLYDGPSVNVEDMWRILGRGTTNGGLVVGTIIKPKLGLQPKPFGEACYSFWQGGDFIKNDEPQGNQVFCQMNECIPEVVKAMRACVKETGSSKLFSANITADDPEEMIARGKYIMSQFGPLSENCAFLVDGYVAGGTAVTCCRRNFPKQFLHYHRAGHGSVTSPQTQRGYTAFVHTKISRVIGASGIHVGTMSFGKMEGDASDKNIAYMLQDDEADGPYYRQEWQGMKETTPIISGGMNALRLPAFFENLGHSNVILTAGGGSFGHKDGPKIGAISCRQGEEAWKQWKAGQFGNISLSDGVIEYAKTHEEIKGAFLTFQKDADQIYPGWKEKLGYTGESSVQAASFDWAKRASAAAFVGASVAPAKKENVVARQALDQSSRYADLSLDEDTLIRNGKHVLVAYIMKPKAGYDYLATAAHFAAESSTGTNVNVCTTDDFTKSVDALVYYIDPDNEEMKIAYPTLLFDRNITDGRGMMCSFLTLAIGNNQGMGDVEYGKIYDFYLPPAFLRLYDGPSVNVEDMWRILGRGTTNGGLVVGTIIKPKLGLQPKPFGEACYSFWQGGDFIKNDEPQGNQVFCQMNECIPEVVKAMRACVKETGSSKLFSANITADDPEEMIARGKYIMSQFGPLSENCAFLVDGYVAGGTAVTCCRRNFPKQFLHYHRAGHGSVTSPQTQRGYTAFVHTKISRVIGASGIHVGTMSFGKMEGDASDKNIAYMLQDDEADGPYYRQEWQGMKETTPIISGGMNALRLPAFFENLGHSNVILTAGGGSFGHKDGPKIGAISCRQGEEAWKQWKAGQFGNISLSDGVIEYAKTHEEIKGAFLTFQKDADQIYPGWKEKLGYTGESSVQAASFDWAKRASAAAFVGASVAPAKKENVVARQALDQSSRYADLSLDEDTLIRNGKHVLVAYIMKPKAGYDYLATAAHFAAESSTGTNVNVCTTDDFTKSVDALVYYIDPDNEEMKIAYPTLLFDRNITDGRGMMCSFLTLAIGNNQGMGDVEYGKIYDFYLPPAFLRLYDGPSVNVEDMWRILGRGTTNGGLVVGTIIKPKLGLQPKPFGEACYSFWQGGDFIKNDEPQGNQVFCQMNECIPEVVKAMRACVKETGSSKLFSANITADDPEEMIARGKYIMSQFGPLSENCAFLVDGYVAGGTAVTCCRRNFPKQFLHYHRAGHGSVTSPQTQRGYTAFVHTKISRVIGASGIHVGTMSFGKMEGDASDKNIAYMLQDDEADGPYYRQEWQGMKETTPIISGGMNALRLPAFFENLGHSKVILTAGGGSFGHKDGPKIGAISCRQGEEAWKQWKAGQFGNISLSDGVIEYAKTHEEIKGAFLTFQKDADQIYPGWKEKLGYTGESSVQAASFDWAKRA</sequence>
<proteinExistence type="evidence at protein level"/>
<comment type="function">
    <text evidence="1">RuBisCO catalyzes two reactions: the carboxylation of D-ribulose 1,5-bisphosphate, the primary event in carbon dioxide fixation, as well as the oxidative fragmentation of the pentose substrate. Both reactions occur simultaneously and in competition at the same active site (By similarity).</text>
</comment>
<comment type="catalytic activity">
    <reaction>
        <text>2 (2R)-3-phosphoglycerate + 2 H(+) = D-ribulose 1,5-bisphosphate + CO2 + H2O</text>
        <dbReference type="Rhea" id="RHEA:23124"/>
        <dbReference type="ChEBI" id="CHEBI:15377"/>
        <dbReference type="ChEBI" id="CHEBI:15378"/>
        <dbReference type="ChEBI" id="CHEBI:16526"/>
        <dbReference type="ChEBI" id="CHEBI:57870"/>
        <dbReference type="ChEBI" id="CHEBI:58272"/>
        <dbReference type="EC" id="4.1.1.39"/>
    </reaction>
</comment>
<comment type="catalytic activity">
    <reaction>
        <text>D-ribulose 1,5-bisphosphate + O2 = 2-phosphoglycolate + (2R)-3-phosphoglycerate + 2 H(+)</text>
        <dbReference type="Rhea" id="RHEA:36631"/>
        <dbReference type="ChEBI" id="CHEBI:15378"/>
        <dbReference type="ChEBI" id="CHEBI:15379"/>
        <dbReference type="ChEBI" id="CHEBI:57870"/>
        <dbReference type="ChEBI" id="CHEBI:58033"/>
        <dbReference type="ChEBI" id="CHEBI:58272"/>
    </reaction>
</comment>
<comment type="cofactor">
    <cofactor evidence="1">
        <name>Mg(2+)</name>
        <dbReference type="ChEBI" id="CHEBI:18420"/>
    </cofactor>
    <text evidence="1">Binds 1 Mg(2+) ion per subunit.</text>
</comment>
<comment type="subunit">
    <text evidence="1">Homodimer.</text>
</comment>
<comment type="subcellular location">
    <subcellularLocation>
        <location evidence="3">Plastid</location>
        <location evidence="3">Chloroplast</location>
    </subcellularLocation>
    <text>In this organism the plastid is the result of a secondary endosymbiosis event, and thus is found within the endomembrane system, necessitating a complex targeting process.</text>
</comment>
<comment type="miscellaneous">
    <text evidence="1">The basic functional RuBisCO is composed of a large chain homodimer in a 'head-to-tail' conformation. In contrast to form I RuBisCO, the form II RuBisCO are composed solely of large subunits (By similarity).</text>
</comment>
<comment type="miscellaneous">
    <text>Synthesized as an approximately 175 kDa polyprotein, imported into chloroplasts and subsequently cleaved into 3 mature RuBisCO proteins. All 3 RuBisCO copies are present in this protein.</text>
</comment>
<comment type="miscellaneous">
    <text evidence="1">This may be first cotranslationally imported into the ER up to a stop-transfer signal, so that the N-terminal region of the transit peptide is in the lumen of the ER while the rest of the protein remains in the cytoplasm. Maintaining this topology, proteins are directed to the Golgi and sorted into vesicles that will fuse with the outermost plastid membrane, exposing the transit peptide to the Toc/Tic apparatus, which draws the entire protein across the remaining membranes (By similarity).</text>
</comment>
<comment type="similarity">
    <text evidence="3">Belongs to the RuBisCO large chain family. Type II subfamily.</text>
</comment>
<comment type="caution">
    <text evidence="3">Note that unlike other eukaryotes, peridinin-containing dinoflagellates have a nuclear-encoded chloroplast-targeted form II RuBisCO.</text>
</comment>
<protein>
    <recommendedName>
        <fullName>Ribulose bisphosphate carboxylase</fullName>
        <shortName>RuBisCO</shortName>
        <ecNumber>4.1.1.39</ecNumber>
    </recommendedName>
    <component>
        <recommendedName>
            <fullName>Ribulose bisphosphate carboxylase 1</fullName>
        </recommendedName>
    </component>
    <component>
        <recommendedName>
            <fullName>Ribulose bisphosphate carboxylase 2</fullName>
        </recommendedName>
    </component>
    <component>
        <recommendedName>
            <fullName>Ribulose bisphosphate carboxylase 3</fullName>
        </recommendedName>
    </component>
</protein>
<accession>Q41406</accession>
<feature type="chain" id="PRO_0000042978" description="Ribulose bisphosphate carboxylase 1">
    <location>
        <begin position="1"/>
        <end position="485"/>
    </location>
</feature>
<feature type="propeptide" id="PRO_0000042979" description="Linker">
    <location>
        <begin position="486"/>
        <end position="508"/>
    </location>
</feature>
<feature type="chain" id="PRO_0000042980" description="Ribulose bisphosphate carboxylase 2">
    <location>
        <begin position="509"/>
        <end position="993"/>
    </location>
</feature>
<feature type="propeptide" id="PRO_0000042981" description="Linker">
    <location>
        <begin position="994"/>
        <end position="1016"/>
    </location>
</feature>
<feature type="chain" id="PRO_0000042982" description="Ribulose bisphosphate carboxylase 3">
    <location>
        <begin position="1017"/>
        <end position="1501"/>
    </location>
</feature>
<feature type="active site" description="Proton acceptor" evidence="1">
    <location>
        <position position="166"/>
    </location>
</feature>
<feature type="active site" description="Proton acceptor" evidence="1">
    <location>
        <position position="287"/>
    </location>
</feature>
<feature type="active site" description="Proton acceptor" evidence="1">
    <location>
        <position position="674"/>
    </location>
</feature>
<feature type="active site" description="Proton acceptor" evidence="1">
    <location>
        <position position="795"/>
    </location>
</feature>
<feature type="active site" description="Proton acceptor" evidence="1">
    <location>
        <position position="1182"/>
    </location>
</feature>
<feature type="active site" description="Proton acceptor" evidence="1">
    <location>
        <position position="1303"/>
    </location>
</feature>
<feature type="binding site" description="in homodimeric partner" evidence="1">
    <location>
        <position position="111"/>
    </location>
    <ligand>
        <name>substrate</name>
    </ligand>
</feature>
<feature type="binding site" evidence="1">
    <location>
        <position position="168"/>
    </location>
    <ligand>
        <name>substrate</name>
    </ligand>
</feature>
<feature type="binding site" description="via carbamate group" evidence="2">
    <location>
        <position position="191"/>
    </location>
    <ligand>
        <name>Mg(2+)</name>
        <dbReference type="ChEBI" id="CHEBI:18420"/>
    </ligand>
</feature>
<feature type="binding site" evidence="2">
    <location>
        <position position="193"/>
    </location>
    <ligand>
        <name>Mg(2+)</name>
        <dbReference type="ChEBI" id="CHEBI:18420"/>
    </ligand>
</feature>
<feature type="binding site" evidence="2">
    <location>
        <position position="194"/>
    </location>
    <ligand>
        <name>Mg(2+)</name>
        <dbReference type="ChEBI" id="CHEBI:18420"/>
    </ligand>
</feature>
<feature type="binding site" evidence="1">
    <location>
        <position position="288"/>
    </location>
    <ligand>
        <name>substrate</name>
    </ligand>
</feature>
<feature type="binding site" evidence="1">
    <location>
        <position position="321"/>
    </location>
    <ligand>
        <name>substrate</name>
    </ligand>
</feature>
<feature type="binding site" evidence="1">
    <location>
        <position position="368"/>
    </location>
    <ligand>
        <name>substrate</name>
    </ligand>
</feature>
<feature type="binding site" description="in homodimeric partner" evidence="1">
    <location>
        <position position="619"/>
    </location>
    <ligand>
        <name>substrate</name>
    </ligand>
</feature>
<feature type="binding site" evidence="1">
    <location>
        <position position="676"/>
    </location>
    <ligand>
        <name>substrate</name>
    </ligand>
</feature>
<feature type="binding site" description="via carbamate group" evidence="2">
    <location>
        <position position="699"/>
    </location>
    <ligand>
        <name>Mg(2+)</name>
        <dbReference type="ChEBI" id="CHEBI:18420"/>
    </ligand>
</feature>
<feature type="binding site" evidence="2">
    <location>
        <position position="701"/>
    </location>
    <ligand>
        <name>Mg(2+)</name>
        <dbReference type="ChEBI" id="CHEBI:18420"/>
    </ligand>
</feature>
<feature type="binding site" evidence="2">
    <location>
        <position position="702"/>
    </location>
    <ligand>
        <name>Mg(2+)</name>
        <dbReference type="ChEBI" id="CHEBI:18420"/>
    </ligand>
</feature>
<feature type="binding site" evidence="1">
    <location>
        <position position="796"/>
    </location>
    <ligand>
        <name>substrate</name>
    </ligand>
</feature>
<feature type="binding site" evidence="1">
    <location>
        <position position="829"/>
    </location>
    <ligand>
        <name>substrate</name>
    </ligand>
</feature>
<feature type="binding site" evidence="1">
    <location>
        <position position="876"/>
    </location>
    <ligand>
        <name>substrate</name>
    </ligand>
</feature>
<feature type="binding site" description="in homodimeric partner" evidence="1">
    <location>
        <position position="1127"/>
    </location>
    <ligand>
        <name>substrate</name>
    </ligand>
</feature>
<feature type="binding site" evidence="1">
    <location>
        <position position="1184"/>
    </location>
    <ligand>
        <name>substrate</name>
    </ligand>
</feature>
<feature type="binding site" description="via carbamate group" evidence="2">
    <location>
        <position position="1207"/>
    </location>
    <ligand>
        <name>Mg(2+)</name>
        <dbReference type="ChEBI" id="CHEBI:18420"/>
    </ligand>
</feature>
<feature type="binding site" evidence="2">
    <location>
        <position position="1209"/>
    </location>
    <ligand>
        <name>Mg(2+)</name>
        <dbReference type="ChEBI" id="CHEBI:18420"/>
    </ligand>
</feature>
<feature type="binding site" evidence="2">
    <location>
        <position position="1210"/>
    </location>
    <ligand>
        <name>Mg(2+)</name>
        <dbReference type="ChEBI" id="CHEBI:18420"/>
    </ligand>
</feature>
<feature type="binding site" evidence="1">
    <location>
        <position position="1304"/>
    </location>
    <ligand>
        <name>substrate</name>
    </ligand>
</feature>
<feature type="binding site" evidence="1">
    <location>
        <position position="1337"/>
    </location>
    <ligand>
        <name>substrate</name>
    </ligand>
</feature>
<feature type="binding site" evidence="1">
    <location>
        <position position="1384"/>
    </location>
    <ligand>
        <name>substrate</name>
    </ligand>
</feature>
<feature type="site" description="Transition state stabilizer" evidence="1">
    <location>
        <position position="329"/>
    </location>
</feature>
<feature type="site" description="Transition state stabilizer" evidence="1">
    <location>
        <position position="837"/>
    </location>
</feature>
<feature type="site" description="Transition state stabilizer" evidence="1">
    <location>
        <position position="1345"/>
    </location>
</feature>
<feature type="modified residue" description="N6-carboxylysine" evidence="2">
    <location>
        <position position="191"/>
    </location>
</feature>
<feature type="modified residue" description="N6-carboxylysine" evidence="2">
    <location>
        <position position="699"/>
    </location>
</feature>
<feature type="modified residue" description="N6-carboxylysine" evidence="2">
    <location>
        <position position="1207"/>
    </location>
</feature>
<feature type="sequence conflict" description="In Ref. 1; AA sequence." evidence="3" ref="1">
    <original>L</original>
    <variation>G</variation>
    <location>
        <position position="1"/>
    </location>
</feature>
<feature type="sequence conflict" description="In Ref. 1; AA sequence." evidence="3" ref="1">
    <original>L</original>
    <variation>R</variation>
    <location>
        <position position="1"/>
    </location>
</feature>
<feature type="sequence conflict" description="In Ref. 1; AA sequence." evidence="3" ref="1">
    <original>W</original>
    <variation>G</variation>
    <location>
        <position position="147"/>
    </location>
</feature>
<feature type="sequence conflict" description="In Ref. 1; AA sequence." evidence="3" ref="1">
    <original>MS</original>
    <variation>TD</variation>
    <location>
        <begin position="248"/>
        <end position="249"/>
    </location>
</feature>
<feature type="non-terminal residue">
    <location>
        <position position="1"/>
    </location>
</feature>
<reference key="1">
    <citation type="journal article" date="1996" name="Plant Cell">
        <title>Rubisco in marine symbiotic dinoflagellates: form II enzymes in eukaryotic oxygenic phototrophs encoded by a nuclear multigene family.</title>
        <authorList>
            <person name="Rowan R."/>
            <person name="Whitney S.M."/>
            <person name="Fowler A."/>
            <person name="Yellowlees D."/>
        </authorList>
    </citation>
    <scope>NUCLEOTIDE SEQUENCE [GENOMIC DNA]</scope>
    <scope>PROTEIN SEQUENCE OF 1-21; 30-45; 65-97; 146-160; 240-252; 330-348 AND 371-388</scope>
</reference>
<gene>
    <name type="primary">rbcL</name>
    <name type="synonym">rbcA</name>
</gene>
<organism>
    <name type="scientific">Symbiodinium sp.</name>
    <name type="common">Dinoflagellate</name>
    <dbReference type="NCBI Taxonomy" id="2950"/>
    <lineage>
        <taxon>Eukaryota</taxon>
        <taxon>Sar</taxon>
        <taxon>Alveolata</taxon>
        <taxon>Dinophyceae</taxon>
        <taxon>Suessiales</taxon>
        <taxon>Symbiodiniaceae</taxon>
        <taxon>Symbiodinium</taxon>
    </lineage>
</organism>